<sequence>PLRPGPATLGVLLGSDCPHPAVCEGCQRPISDRFLMRVNESSWHEECLQCAACQQALTTSCYFRDRKLYCKQDYQQLFAAKCSGCMEKIAPTEFVMRALECVYHLGCFCCCVCERQLRKGDEFVLKEGQLLCKGDYEKEKDLLSSVSPDESDSVKSEDEDGDMKPAKGQGSQSKGGGDDGKDPRRPKRPRTILTTQQRRAFKASFEVSSKPCRKVRETLAAETGLSVRVVQVWFQNQRAKMKKLARRHQQQQEQQNSQRLGQEVLSSRMEGMMASYTPLAPPQQQIVAMEQSPCGSSDPFQQGLTPPQMPGDHMNPYGNDSIFHDIDSDTSLTSLSDCFLGSSDVGSLQARVGNPIDRLYSMQSSYFAS</sequence>
<reference key="1">
    <citation type="submission" date="1996-07" db="EMBL/GenBank/DDBJ databases">
        <authorList>
            <person name="Zhang W."/>
            <person name="Johnson J.D."/>
            <person name="Rudnick A."/>
            <person name="German M.S."/>
        </authorList>
    </citation>
    <scope>NUCLEOTIDE SEQUENCE [MRNA]</scope>
</reference>
<feature type="chain" id="PRO_0000075829" description="LIM homeobox transcription factor 1-beta">
    <location>
        <begin position="1" status="less than"/>
        <end position="369"/>
    </location>
</feature>
<feature type="domain" description="LIM zinc-binding 1" evidence="3">
    <location>
        <begin position="23"/>
        <end position="73"/>
    </location>
</feature>
<feature type="domain" description="LIM zinc-binding 2" evidence="3">
    <location>
        <begin position="82"/>
        <end position="135"/>
    </location>
</feature>
<feature type="DNA-binding region" description="Homeobox" evidence="2">
    <location>
        <begin position="186"/>
        <end position="245"/>
    </location>
</feature>
<feature type="region of interest" description="Disordered" evidence="4">
    <location>
        <begin position="143"/>
        <end position="196"/>
    </location>
</feature>
<feature type="non-terminal residue">
    <location>
        <position position="1"/>
    </location>
</feature>
<dbReference type="EMBL" id="U61141">
    <property type="protein sequence ID" value="AAB62320.1"/>
    <property type="molecule type" value="mRNA"/>
</dbReference>
<dbReference type="SMR" id="Q60564"/>
<dbReference type="STRING" id="10036.ENSMAUP00000024238"/>
<dbReference type="eggNOG" id="KOG0490">
    <property type="taxonomic scope" value="Eukaryota"/>
</dbReference>
<dbReference type="Proteomes" id="UP000189706">
    <property type="component" value="Unplaced"/>
</dbReference>
<dbReference type="GO" id="GO:0005634">
    <property type="term" value="C:nucleus"/>
    <property type="evidence" value="ECO:0007669"/>
    <property type="project" value="UniProtKB-SubCell"/>
</dbReference>
<dbReference type="GO" id="GO:0000981">
    <property type="term" value="F:DNA-binding transcription factor activity, RNA polymerase II-specific"/>
    <property type="evidence" value="ECO:0007669"/>
    <property type="project" value="InterPro"/>
</dbReference>
<dbReference type="GO" id="GO:0046872">
    <property type="term" value="F:metal ion binding"/>
    <property type="evidence" value="ECO:0007669"/>
    <property type="project" value="UniProtKB-KW"/>
</dbReference>
<dbReference type="GO" id="GO:0000977">
    <property type="term" value="F:RNA polymerase II transcription regulatory region sequence-specific DNA binding"/>
    <property type="evidence" value="ECO:0007669"/>
    <property type="project" value="TreeGrafter"/>
</dbReference>
<dbReference type="GO" id="GO:0030182">
    <property type="term" value="P:neuron differentiation"/>
    <property type="evidence" value="ECO:0007669"/>
    <property type="project" value="TreeGrafter"/>
</dbReference>
<dbReference type="CDD" id="cd00086">
    <property type="entry name" value="homeodomain"/>
    <property type="match status" value="1"/>
</dbReference>
<dbReference type="CDD" id="cd09371">
    <property type="entry name" value="LIM1_Lmx1b"/>
    <property type="match status" value="1"/>
</dbReference>
<dbReference type="CDD" id="cd09378">
    <property type="entry name" value="LIM2_Lmx1a_Lmx1b"/>
    <property type="match status" value="1"/>
</dbReference>
<dbReference type="FunFam" id="1.10.10.60:FF:000095">
    <property type="entry name" value="LIM homeobox transcription factor 1 beta"/>
    <property type="match status" value="1"/>
</dbReference>
<dbReference type="FunFam" id="2.10.110.10:FF:000006">
    <property type="entry name" value="LIM homeobox transcription factor 1-beta"/>
    <property type="match status" value="1"/>
</dbReference>
<dbReference type="FunFam" id="2.10.110.10:FF:000257">
    <property type="entry name" value="Transcription factor Lmx1b"/>
    <property type="match status" value="1"/>
</dbReference>
<dbReference type="Gene3D" id="2.10.110.10">
    <property type="entry name" value="Cysteine Rich Protein"/>
    <property type="match status" value="2"/>
</dbReference>
<dbReference type="Gene3D" id="1.10.10.60">
    <property type="entry name" value="Homeodomain-like"/>
    <property type="match status" value="1"/>
</dbReference>
<dbReference type="InterPro" id="IPR001356">
    <property type="entry name" value="HD"/>
</dbReference>
<dbReference type="InterPro" id="IPR017970">
    <property type="entry name" value="Homeobox_CS"/>
</dbReference>
<dbReference type="InterPro" id="IPR009057">
    <property type="entry name" value="Homeodomain-like_sf"/>
</dbReference>
<dbReference type="InterPro" id="IPR050453">
    <property type="entry name" value="LIM_Homeobox_TF"/>
</dbReference>
<dbReference type="InterPro" id="IPR001781">
    <property type="entry name" value="Znf_LIM"/>
</dbReference>
<dbReference type="PANTHER" id="PTHR24208:SF96">
    <property type="entry name" value="LIM HOMEOBOX TRANSCRIPTION FACTOR 1-BETA"/>
    <property type="match status" value="1"/>
</dbReference>
<dbReference type="PANTHER" id="PTHR24208">
    <property type="entry name" value="LIM/HOMEOBOX PROTEIN LHX"/>
    <property type="match status" value="1"/>
</dbReference>
<dbReference type="Pfam" id="PF00046">
    <property type="entry name" value="Homeodomain"/>
    <property type="match status" value="1"/>
</dbReference>
<dbReference type="Pfam" id="PF00412">
    <property type="entry name" value="LIM"/>
    <property type="match status" value="2"/>
</dbReference>
<dbReference type="SMART" id="SM00389">
    <property type="entry name" value="HOX"/>
    <property type="match status" value="1"/>
</dbReference>
<dbReference type="SMART" id="SM00132">
    <property type="entry name" value="LIM"/>
    <property type="match status" value="2"/>
</dbReference>
<dbReference type="SUPFAM" id="SSF57716">
    <property type="entry name" value="Glucocorticoid receptor-like (DNA-binding domain)"/>
    <property type="match status" value="2"/>
</dbReference>
<dbReference type="SUPFAM" id="SSF46689">
    <property type="entry name" value="Homeodomain-like"/>
    <property type="match status" value="1"/>
</dbReference>
<dbReference type="PROSITE" id="PS00027">
    <property type="entry name" value="HOMEOBOX_1"/>
    <property type="match status" value="1"/>
</dbReference>
<dbReference type="PROSITE" id="PS50071">
    <property type="entry name" value="HOMEOBOX_2"/>
    <property type="match status" value="1"/>
</dbReference>
<dbReference type="PROSITE" id="PS00478">
    <property type="entry name" value="LIM_DOMAIN_1"/>
    <property type="match status" value="2"/>
</dbReference>
<dbReference type="PROSITE" id="PS50023">
    <property type="entry name" value="LIM_DOMAIN_2"/>
    <property type="match status" value="2"/>
</dbReference>
<comment type="function">
    <text evidence="1">Transcription factor involved in the regulation of podocyte-expressed genes. Essential for the specification of dorsal limb fate at both the zeugopodal and autopodal levels.</text>
</comment>
<comment type="subunit">
    <text evidence="1">Interacts with DHX9.</text>
</comment>
<comment type="subcellular location">
    <subcellularLocation>
        <location evidence="2">Nucleus</location>
    </subcellularLocation>
</comment>
<keyword id="KW-0010">Activator</keyword>
<keyword id="KW-0217">Developmental protein</keyword>
<keyword id="KW-0238">DNA-binding</keyword>
<keyword id="KW-0371">Homeobox</keyword>
<keyword id="KW-0440">LIM domain</keyword>
<keyword id="KW-0479">Metal-binding</keyword>
<keyword id="KW-0539">Nucleus</keyword>
<keyword id="KW-1185">Reference proteome</keyword>
<keyword id="KW-0677">Repeat</keyword>
<keyword id="KW-0804">Transcription</keyword>
<keyword id="KW-0805">Transcription regulation</keyword>
<keyword id="KW-0862">Zinc</keyword>
<gene>
    <name type="primary">LMX1B</name>
    <name type="synonym">LMX1.2</name>
</gene>
<accession>Q60564</accession>
<proteinExistence type="evidence at transcript level"/>
<evidence type="ECO:0000250" key="1">
    <source>
        <dbReference type="UniProtKB" id="O60663"/>
    </source>
</evidence>
<evidence type="ECO:0000255" key="2">
    <source>
        <dbReference type="PROSITE-ProRule" id="PRU00108"/>
    </source>
</evidence>
<evidence type="ECO:0000255" key="3">
    <source>
        <dbReference type="PROSITE-ProRule" id="PRU00125"/>
    </source>
</evidence>
<evidence type="ECO:0000256" key="4">
    <source>
        <dbReference type="SAM" id="MobiDB-lite"/>
    </source>
</evidence>
<name>LMX1B_MESAU</name>
<organism>
    <name type="scientific">Mesocricetus auratus</name>
    <name type="common">Golden hamster</name>
    <dbReference type="NCBI Taxonomy" id="10036"/>
    <lineage>
        <taxon>Eukaryota</taxon>
        <taxon>Metazoa</taxon>
        <taxon>Chordata</taxon>
        <taxon>Craniata</taxon>
        <taxon>Vertebrata</taxon>
        <taxon>Euteleostomi</taxon>
        <taxon>Mammalia</taxon>
        <taxon>Eutheria</taxon>
        <taxon>Euarchontoglires</taxon>
        <taxon>Glires</taxon>
        <taxon>Rodentia</taxon>
        <taxon>Myomorpha</taxon>
        <taxon>Muroidea</taxon>
        <taxon>Cricetidae</taxon>
        <taxon>Cricetinae</taxon>
        <taxon>Mesocricetus</taxon>
    </lineage>
</organism>
<protein>
    <recommendedName>
        <fullName>LIM homeobox transcription factor 1-beta</fullName>
    </recommendedName>
    <alternativeName>
        <fullName>LIM/homeobox protein 1.2</fullName>
        <shortName>LMX-1.2</shortName>
    </alternativeName>
    <alternativeName>
        <fullName>LIM/homeobox protein LMX1B</fullName>
    </alternativeName>
</protein>